<keyword id="KW-0025">Alternative splicing</keyword>
<keyword id="KW-0968">Cytoplasmic vesicle</keyword>
<keyword id="KW-0217">Developmental protein</keyword>
<keyword id="KW-0221">Differentiation</keyword>
<keyword id="KW-0903">Direct protein sequencing</keyword>
<keyword id="KW-1015">Disulfide bond</keyword>
<keyword id="KW-0325">Glycoprotein</keyword>
<keyword id="KW-0472">Membrane</keyword>
<keyword id="KW-0597">Phosphoprotein</keyword>
<keyword id="KW-0653">Protein transport</keyword>
<keyword id="KW-1185">Reference proteome</keyword>
<keyword id="KW-0677">Repeat</keyword>
<keyword id="KW-0964">Secreted</keyword>
<keyword id="KW-0732">Signal</keyword>
<keyword id="KW-0812">Transmembrane</keyword>
<keyword id="KW-1133">Transmembrane helix</keyword>
<keyword id="KW-0813">Transport</keyword>
<dbReference type="EMBL" id="AF540887">
    <property type="protein sequence ID" value="AAN16473.1"/>
    <property type="molecule type" value="mRNA"/>
</dbReference>
<dbReference type="EMBL" id="AY548057">
    <property type="protein sequence ID" value="AAS46613.1"/>
    <property type="molecule type" value="mRNA"/>
</dbReference>
<dbReference type="EMBL" id="U32681">
    <property type="protein sequence ID" value="AAC52248.1"/>
    <property type="status" value="ALT_INIT"/>
    <property type="molecule type" value="mRNA"/>
</dbReference>
<dbReference type="PIR" id="A57190">
    <property type="entry name" value="A57190"/>
</dbReference>
<dbReference type="RefSeq" id="NP_074040.2">
    <property type="nucleotide sequence ID" value="NM_022849.3"/>
</dbReference>
<dbReference type="SMR" id="Q8CIZ5"/>
<dbReference type="STRING" id="10116.ENSRNOP00000051793"/>
<dbReference type="GlyCosmos" id="Q8CIZ5">
    <property type="glycosylation" value="15 sites, No reported glycans"/>
</dbReference>
<dbReference type="GlyGen" id="Q8CIZ5">
    <property type="glycosylation" value="20 sites"/>
</dbReference>
<dbReference type="PhosphoSitePlus" id="Q8CIZ5"/>
<dbReference type="GeneID" id="170568"/>
<dbReference type="KEGG" id="rno:170568"/>
<dbReference type="UCSC" id="RGD:61984">
    <molecule id="Q8CIZ5-1"/>
    <property type="organism name" value="rat"/>
</dbReference>
<dbReference type="AGR" id="RGD:61984"/>
<dbReference type="CTD" id="1755"/>
<dbReference type="RGD" id="61984">
    <property type="gene designation" value="Dmbt1"/>
</dbReference>
<dbReference type="eggNOG" id="ENOG502QQ5W">
    <property type="taxonomic scope" value="Eukaryota"/>
</dbReference>
<dbReference type="InParanoid" id="Q8CIZ5"/>
<dbReference type="OrthoDB" id="85151at9989"/>
<dbReference type="PhylomeDB" id="Q8CIZ5"/>
<dbReference type="PRO" id="PR:Q8CIZ5"/>
<dbReference type="Proteomes" id="UP000002494">
    <property type="component" value="Unplaced"/>
</dbReference>
<dbReference type="GO" id="GO:0005737">
    <property type="term" value="C:cytoplasm"/>
    <property type="evidence" value="ECO:0000266"/>
    <property type="project" value="RGD"/>
</dbReference>
<dbReference type="GO" id="GO:0031012">
    <property type="term" value="C:extracellular matrix"/>
    <property type="evidence" value="ECO:0000250"/>
    <property type="project" value="UniProtKB"/>
</dbReference>
<dbReference type="GO" id="GO:0005615">
    <property type="term" value="C:extracellular space"/>
    <property type="evidence" value="ECO:0000318"/>
    <property type="project" value="GO_Central"/>
</dbReference>
<dbReference type="GO" id="GO:0030670">
    <property type="term" value="C:phagocytic vesicle membrane"/>
    <property type="evidence" value="ECO:0000266"/>
    <property type="project" value="RGD"/>
</dbReference>
<dbReference type="GO" id="GO:0030658">
    <property type="term" value="C:transport vesicle membrane"/>
    <property type="evidence" value="ECO:0007669"/>
    <property type="project" value="UniProtKB-SubCell"/>
</dbReference>
<dbReference type="GO" id="GO:0042589">
    <property type="term" value="C:zymogen granule membrane"/>
    <property type="evidence" value="ECO:0000250"/>
    <property type="project" value="UniProtKB"/>
</dbReference>
<dbReference type="GO" id="GO:0035375">
    <property type="term" value="F:zymogen binding"/>
    <property type="evidence" value="ECO:0000250"/>
    <property type="project" value="UniProtKB"/>
</dbReference>
<dbReference type="GO" id="GO:0001824">
    <property type="term" value="P:blastocyst development"/>
    <property type="evidence" value="ECO:0000266"/>
    <property type="project" value="RGD"/>
</dbReference>
<dbReference type="GO" id="GO:0030154">
    <property type="term" value="P:cell differentiation"/>
    <property type="evidence" value="ECO:0000270"/>
    <property type="project" value="RGD"/>
</dbReference>
<dbReference type="GO" id="GO:0002065">
    <property type="term" value="P:columnar/cuboidal epithelial cell differentiation"/>
    <property type="evidence" value="ECO:0000266"/>
    <property type="project" value="RGD"/>
</dbReference>
<dbReference type="GO" id="GO:0006952">
    <property type="term" value="P:defense response"/>
    <property type="evidence" value="ECO:0000318"/>
    <property type="project" value="GO_Central"/>
</dbReference>
<dbReference type="GO" id="GO:0050829">
    <property type="term" value="P:defense response to Gram-negative bacterium"/>
    <property type="evidence" value="ECO:0000250"/>
    <property type="project" value="UniProtKB"/>
</dbReference>
<dbReference type="GO" id="GO:0050830">
    <property type="term" value="P:defense response to Gram-positive bacterium"/>
    <property type="evidence" value="ECO:0000250"/>
    <property type="project" value="UniProtKB"/>
</dbReference>
<dbReference type="GO" id="GO:0001833">
    <property type="term" value="P:inner cell mass cell proliferation"/>
    <property type="evidence" value="ECO:0000266"/>
    <property type="project" value="RGD"/>
</dbReference>
<dbReference type="GO" id="GO:0030858">
    <property type="term" value="P:positive regulation of epithelial cell differentiation"/>
    <property type="evidence" value="ECO:0000266"/>
    <property type="project" value="RGD"/>
</dbReference>
<dbReference type="GO" id="GO:0015031">
    <property type="term" value="P:protein transport"/>
    <property type="evidence" value="ECO:0007669"/>
    <property type="project" value="UniProtKB-KW"/>
</dbReference>
<dbReference type="GO" id="GO:0009617">
    <property type="term" value="P:response to bacterium"/>
    <property type="evidence" value="ECO:0000266"/>
    <property type="project" value="RGD"/>
</dbReference>
<dbReference type="GO" id="GO:1904614">
    <property type="term" value="P:response to biphenyl"/>
    <property type="evidence" value="ECO:0000270"/>
    <property type="project" value="RGD"/>
</dbReference>
<dbReference type="GO" id="GO:0043627">
    <property type="term" value="P:response to estrogen"/>
    <property type="evidence" value="ECO:0000270"/>
    <property type="project" value="RGD"/>
</dbReference>
<dbReference type="GO" id="GO:0042246">
    <property type="term" value="P:tissue regeneration"/>
    <property type="evidence" value="ECO:0000270"/>
    <property type="project" value="RGD"/>
</dbReference>
<dbReference type="CDD" id="cd00041">
    <property type="entry name" value="CUB"/>
    <property type="match status" value="3"/>
</dbReference>
<dbReference type="FunFam" id="2.60.40.3210:FF:000005">
    <property type="entry name" value="Deleted in malignant brain tumors 1"/>
    <property type="match status" value="1"/>
</dbReference>
<dbReference type="FunFam" id="2.60.40.4100:FF:000005">
    <property type="entry name" value="Deleted in malignant brain tumors 1"/>
    <property type="match status" value="1"/>
</dbReference>
<dbReference type="FunFam" id="3.10.250.10:FF:000003">
    <property type="entry name" value="Deleted in malignant brain tumors 1"/>
    <property type="match status" value="4"/>
</dbReference>
<dbReference type="FunFam" id="2.60.120.290:FF:000004">
    <property type="entry name" value="Metalloendopeptidase"/>
    <property type="match status" value="2"/>
</dbReference>
<dbReference type="FunFam" id="2.60.120.290:FF:000003">
    <property type="entry name" value="Neuropilin"/>
    <property type="match status" value="1"/>
</dbReference>
<dbReference type="Gene3D" id="2.60.120.290">
    <property type="entry name" value="Spermadhesin, CUB domain"/>
    <property type="match status" value="3"/>
</dbReference>
<dbReference type="Gene3D" id="3.10.250.10">
    <property type="entry name" value="SRCR-like domain"/>
    <property type="match status" value="5"/>
</dbReference>
<dbReference type="Gene3D" id="2.60.40.4100">
    <property type="entry name" value="Zona pellucida, ZP-C domain"/>
    <property type="match status" value="1"/>
</dbReference>
<dbReference type="Gene3D" id="2.60.40.3210">
    <property type="entry name" value="Zona pellucida, ZP-N domain"/>
    <property type="match status" value="1"/>
</dbReference>
<dbReference type="InterPro" id="IPR000859">
    <property type="entry name" value="CUB_dom"/>
</dbReference>
<dbReference type="InterPro" id="IPR053243">
    <property type="entry name" value="SJ_maturation_regulator"/>
</dbReference>
<dbReference type="InterPro" id="IPR035914">
    <property type="entry name" value="Sperma_CUB_dom_sf"/>
</dbReference>
<dbReference type="InterPro" id="IPR001190">
    <property type="entry name" value="SRCR"/>
</dbReference>
<dbReference type="InterPro" id="IPR036772">
    <property type="entry name" value="SRCR-like_dom_sf"/>
</dbReference>
<dbReference type="InterPro" id="IPR055355">
    <property type="entry name" value="ZP-C"/>
</dbReference>
<dbReference type="InterPro" id="IPR042235">
    <property type="entry name" value="ZP-C_dom"/>
</dbReference>
<dbReference type="InterPro" id="IPR055356">
    <property type="entry name" value="ZP-N"/>
</dbReference>
<dbReference type="InterPro" id="IPR001507">
    <property type="entry name" value="ZP_dom"/>
</dbReference>
<dbReference type="InterPro" id="IPR017977">
    <property type="entry name" value="ZP_dom_CS"/>
</dbReference>
<dbReference type="PANTHER" id="PTHR47653:SF1">
    <property type="entry name" value="DELETED IN MALIGNANT BRAIN TUMORS 1 PROTEIN"/>
    <property type="match status" value="1"/>
</dbReference>
<dbReference type="PANTHER" id="PTHR47653">
    <property type="entry name" value="PROTEIN BARK BEETLE"/>
    <property type="match status" value="1"/>
</dbReference>
<dbReference type="Pfam" id="PF00431">
    <property type="entry name" value="CUB"/>
    <property type="match status" value="3"/>
</dbReference>
<dbReference type="Pfam" id="PF00530">
    <property type="entry name" value="SRCR"/>
    <property type="match status" value="4"/>
</dbReference>
<dbReference type="Pfam" id="PF00100">
    <property type="entry name" value="Zona_pellucida"/>
    <property type="match status" value="1"/>
</dbReference>
<dbReference type="Pfam" id="PF23344">
    <property type="entry name" value="ZP-N"/>
    <property type="match status" value="1"/>
</dbReference>
<dbReference type="PRINTS" id="PR00258">
    <property type="entry name" value="SPERACTRCPTR"/>
</dbReference>
<dbReference type="SMART" id="SM00042">
    <property type="entry name" value="CUB"/>
    <property type="match status" value="3"/>
</dbReference>
<dbReference type="SMART" id="SM00202">
    <property type="entry name" value="SR"/>
    <property type="match status" value="4"/>
</dbReference>
<dbReference type="SMART" id="SM00241">
    <property type="entry name" value="ZP"/>
    <property type="match status" value="1"/>
</dbReference>
<dbReference type="SUPFAM" id="SSF49854">
    <property type="entry name" value="Spermadhesin, CUB domain"/>
    <property type="match status" value="3"/>
</dbReference>
<dbReference type="SUPFAM" id="SSF56487">
    <property type="entry name" value="SRCR-like"/>
    <property type="match status" value="5"/>
</dbReference>
<dbReference type="PROSITE" id="PS01180">
    <property type="entry name" value="CUB"/>
    <property type="match status" value="3"/>
</dbReference>
<dbReference type="PROSITE" id="PS00420">
    <property type="entry name" value="SRCR_1"/>
    <property type="match status" value="2"/>
</dbReference>
<dbReference type="PROSITE" id="PS50287">
    <property type="entry name" value="SRCR_2"/>
    <property type="match status" value="5"/>
</dbReference>
<dbReference type="PROSITE" id="PS00682">
    <property type="entry name" value="ZP_1"/>
    <property type="match status" value="1"/>
</dbReference>
<dbReference type="PROSITE" id="PS51034">
    <property type="entry name" value="ZP_2"/>
    <property type="match status" value="1"/>
</dbReference>
<accession>Q8CIZ5</accession>
<accession>Q62827</accession>
<accession>Q6QD54</accession>
<proteinExistence type="evidence at protein level"/>
<protein>
    <recommendedName>
        <fullName evidence="12">Scavenger receptor cysteine-rich domain-containing protein DMBT1</fullName>
    </recommendedName>
    <alternativeName>
        <fullName>Deleted in malignant brain tumors 1 protein</fullName>
    </alternativeName>
    <alternativeName>
        <fullName>Ebnerin</fullName>
    </alternativeName>
    <alternativeName>
        <fullName>Hensin</fullName>
    </alternativeName>
    <alternativeName>
        <fullName>Pancrin</fullName>
    </alternativeName>
</protein>
<evidence type="ECO:0000250" key="1"/>
<evidence type="ECO:0000250" key="2">
    <source>
        <dbReference type="UniProtKB" id="Q60997"/>
    </source>
</evidence>
<evidence type="ECO:0000255" key="3"/>
<evidence type="ECO:0000255" key="4">
    <source>
        <dbReference type="PROSITE-ProRule" id="PRU00059"/>
    </source>
</evidence>
<evidence type="ECO:0000255" key="5">
    <source>
        <dbReference type="PROSITE-ProRule" id="PRU00196"/>
    </source>
</evidence>
<evidence type="ECO:0000255" key="6">
    <source>
        <dbReference type="PROSITE-ProRule" id="PRU00375"/>
    </source>
</evidence>
<evidence type="ECO:0000256" key="7">
    <source>
        <dbReference type="SAM" id="MobiDB-lite"/>
    </source>
</evidence>
<evidence type="ECO:0000269" key="8">
    <source>
    </source>
</evidence>
<evidence type="ECO:0000269" key="9">
    <source>
    </source>
</evidence>
<evidence type="ECO:0000269" key="10">
    <source>
    </source>
</evidence>
<evidence type="ECO:0000303" key="11">
    <source ref="2"/>
</evidence>
<evidence type="ECO:0000305" key="12"/>
<feature type="signal peptide" evidence="3">
    <location>
        <begin position="1"/>
        <end position="19"/>
    </location>
</feature>
<feature type="chain" id="PRO_0000045389" description="Scavenger receptor cysteine-rich domain-containing protein DMBT1">
    <location>
        <begin position="20"/>
        <end position="1418"/>
    </location>
</feature>
<feature type="transmembrane region" description="Helical" evidence="3">
    <location>
        <begin position="1383"/>
        <end position="1403"/>
    </location>
</feature>
<feature type="domain" description="SRCR 1" evidence="5">
    <location>
        <begin position="70"/>
        <end position="170"/>
    </location>
</feature>
<feature type="domain" description="SRCR 2" evidence="5">
    <location>
        <begin position="105"/>
        <end position="205"/>
    </location>
</feature>
<feature type="domain" description="SRCR 3" evidence="5">
    <location>
        <begin position="273"/>
        <end position="373"/>
    </location>
</feature>
<feature type="domain" description="SRCR 4" evidence="5">
    <location>
        <begin position="420"/>
        <end position="520"/>
    </location>
</feature>
<feature type="domain" description="CUB 1" evidence="4">
    <location>
        <begin position="574"/>
        <end position="683"/>
    </location>
</feature>
<feature type="domain" description="CUB 2" evidence="4">
    <location>
        <begin position="711"/>
        <end position="820"/>
    </location>
</feature>
<feature type="domain" description="SRCR 5" evidence="5">
    <location>
        <begin position="844"/>
        <end position="944"/>
    </location>
</feature>
<feature type="domain" description="CUB 3" evidence="4">
    <location>
        <begin position="966"/>
        <end position="1075"/>
    </location>
</feature>
<feature type="domain" description="ZP" evidence="6">
    <location>
        <begin position="1084"/>
        <end position="1332"/>
    </location>
</feature>
<feature type="region of interest" description="Disordered" evidence="7">
    <location>
        <begin position="375"/>
        <end position="410"/>
    </location>
</feature>
<feature type="compositionally biased region" description="Low complexity" evidence="7">
    <location>
        <begin position="375"/>
        <end position="391"/>
    </location>
</feature>
<feature type="compositionally biased region" description="Polar residues" evidence="7">
    <location>
        <begin position="397"/>
        <end position="410"/>
    </location>
</feature>
<feature type="modified residue" description="Phosphothreonine" evidence="2">
    <location>
        <position position="1406"/>
    </location>
</feature>
<feature type="modified residue" description="Phosphoserine" evidence="2">
    <location>
        <position position="1415"/>
    </location>
</feature>
<feature type="glycosylation site" description="N-linked (GlcNAc...) asparagine" evidence="3">
    <location>
        <position position="638"/>
    </location>
</feature>
<feature type="glycosylation site" description="N-linked (GlcNAc...) asparagine" evidence="3">
    <location>
        <position position="639"/>
    </location>
</feature>
<feature type="glycosylation site" description="N-linked (GlcNAc...) asparagine" evidence="3">
    <location>
        <position position="651"/>
    </location>
</feature>
<feature type="glycosylation site" description="N-linked (GlcNAc...) asparagine" evidence="3">
    <location>
        <position position="776"/>
    </location>
</feature>
<feature type="glycosylation site" description="N-linked (GlcNAc...) asparagine" evidence="3">
    <location>
        <position position="788"/>
    </location>
</feature>
<feature type="glycosylation site" description="N-linked (GlcNAc...) asparagine" evidence="3">
    <location>
        <position position="838"/>
    </location>
</feature>
<feature type="glycosylation site" description="N-linked (GlcNAc...) asparagine" evidence="3">
    <location>
        <position position="848"/>
    </location>
</feature>
<feature type="glycosylation site" description="N-linked (GlcNAc...) asparagine" evidence="3">
    <location>
        <position position="963"/>
    </location>
</feature>
<feature type="glycosylation site" description="N-linked (GlcNAc...) asparagine" evidence="3">
    <location>
        <position position="1078"/>
    </location>
</feature>
<feature type="glycosylation site" description="N-linked (GlcNAc...) asparagine" evidence="3">
    <location>
        <position position="1079"/>
    </location>
</feature>
<feature type="glycosylation site" description="N-linked (GlcNAc...) asparagine" evidence="3">
    <location>
        <position position="1115"/>
    </location>
</feature>
<feature type="glycosylation site" description="N-linked (GlcNAc...) asparagine" evidence="3">
    <location>
        <position position="1146"/>
    </location>
</feature>
<feature type="glycosylation site" description="N-linked (GlcNAc...) asparagine" evidence="3">
    <location>
        <position position="1150"/>
    </location>
</feature>
<feature type="glycosylation site" description="N-linked (GlcNAc...) asparagine" evidence="3">
    <location>
        <position position="1191"/>
    </location>
</feature>
<feature type="glycosylation site" description="N-linked (GlcNAc...) asparagine" evidence="3">
    <location>
        <position position="1207"/>
    </location>
</feature>
<feature type="disulfide bond" evidence="1">
    <location>
        <begin position="130"/>
        <end position="194"/>
    </location>
</feature>
<feature type="disulfide bond" evidence="1">
    <location>
        <begin position="143"/>
        <end position="204"/>
    </location>
</feature>
<feature type="disulfide bond" evidence="1">
    <location>
        <begin position="174"/>
        <end position="184"/>
    </location>
</feature>
<feature type="disulfide bond" evidence="1">
    <location>
        <begin position="298"/>
        <end position="362"/>
    </location>
</feature>
<feature type="disulfide bond" evidence="1">
    <location>
        <begin position="311"/>
        <end position="372"/>
    </location>
</feature>
<feature type="disulfide bond" evidence="1">
    <location>
        <begin position="342"/>
        <end position="352"/>
    </location>
</feature>
<feature type="disulfide bond" evidence="1">
    <location>
        <begin position="445"/>
        <end position="509"/>
    </location>
</feature>
<feature type="disulfide bond" evidence="1">
    <location>
        <begin position="458"/>
        <end position="519"/>
    </location>
</feature>
<feature type="disulfide bond" evidence="1">
    <location>
        <begin position="489"/>
        <end position="499"/>
    </location>
</feature>
<feature type="disulfide bond" evidence="1">
    <location>
        <begin position="574"/>
        <end position="600"/>
    </location>
</feature>
<feature type="disulfide bond" evidence="1">
    <location>
        <begin position="625"/>
        <end position="647"/>
    </location>
</feature>
<feature type="disulfide bond" evidence="1">
    <location>
        <begin position="711"/>
        <end position="737"/>
    </location>
</feature>
<feature type="disulfide bond" evidence="1">
    <location>
        <begin position="762"/>
        <end position="784"/>
    </location>
</feature>
<feature type="disulfide bond" evidence="1">
    <location>
        <begin position="882"/>
        <end position="943"/>
    </location>
</feature>
<feature type="disulfide bond" evidence="1">
    <location>
        <begin position="913"/>
        <end position="923"/>
    </location>
</feature>
<feature type="disulfide bond" evidence="1">
    <location>
        <begin position="966"/>
        <end position="992"/>
    </location>
</feature>
<feature type="disulfide bond" evidence="1">
    <location>
        <begin position="1017"/>
        <end position="1039"/>
    </location>
</feature>
<feature type="disulfide bond" evidence="1">
    <location>
        <begin position="1253"/>
        <end position="1311"/>
    </location>
</feature>
<feature type="splice variant" id="VSP_016854" description="In isoform 2." evidence="11">
    <location>
        <begin position="63"/>
        <end position="97"/>
    </location>
</feature>
<feature type="splice variant" id="VSP_016855" description="In isoform 2." evidence="11">
    <original>S</original>
    <variation>SPTSSPTPGWWNPGFTNSDVSYRTELPTDDS</variation>
    <location>
        <position position="375"/>
    </location>
</feature>
<feature type="splice variant" id="VSP_016856" description="In isoform 2." evidence="11">
    <original>TPPTTFPIITG</original>
    <variation>R</variation>
    <location>
        <begin position="827"/>
        <end position="837"/>
    </location>
</feature>
<feature type="splice variant" id="VSP_016857" description="In isoform 2." evidence="11">
    <original>VPCADD</original>
    <variation>GTVCDN</variation>
    <location>
        <begin position="866"/>
        <end position="871"/>
    </location>
</feature>
<feature type="splice variant" id="VSP_016858" description="In isoform 2." evidence="11">
    <location>
        <begin position="955"/>
        <end position="961"/>
    </location>
</feature>
<feature type="sequence conflict" description="In Ref. 2; AAS46613." evidence="12" ref="2">
    <original>M</original>
    <variation>V</variation>
    <location>
        <position position="129"/>
    </location>
</feature>
<feature type="sequence conflict" description="In Ref. 2; AAS46613." evidence="12" ref="2">
    <original>LGP</original>
    <variation>SGS</variation>
    <location>
        <begin position="164"/>
        <end position="166"/>
    </location>
</feature>
<feature type="sequence conflict" description="In Ref. 2; AAS46613." evidence="12" ref="2">
    <original>R</original>
    <variation>T</variation>
    <location>
        <position position="343"/>
    </location>
</feature>
<feature type="sequence conflict" description="In Ref. 2; AAS46613." evidence="12" ref="2">
    <original>V</original>
    <variation>G</variation>
    <location>
        <position position="462"/>
    </location>
</feature>
<feature type="sequence conflict" description="In Ref. 2; AAS46613." evidence="12" ref="2">
    <original>N</original>
    <variation>Y</variation>
    <location>
        <position position="638"/>
    </location>
</feature>
<feature type="sequence conflict" description="In Ref. 2; AAS46613." evidence="12" ref="2">
    <original>G</original>
    <variation>V</variation>
    <location>
        <position position="769"/>
    </location>
</feature>
<feature type="sequence conflict" description="In Ref. 2; AAS46613." evidence="12" ref="2">
    <original>T</original>
    <variation>I</variation>
    <location>
        <position position="1058"/>
    </location>
</feature>
<feature type="sequence conflict" description="In Ref. 2; AAS46613." evidence="12" ref="2">
    <original>S</original>
    <variation>A</variation>
    <location>
        <position position="1106"/>
    </location>
</feature>
<feature type="sequence conflict" description="In Ref. 2; AAS46613." evidence="12" ref="2">
    <original>N</original>
    <variation>Y</variation>
    <location>
        <position position="1319"/>
    </location>
</feature>
<name>DMBT1_RAT</name>
<reference key="1">
    <citation type="journal article" date="2002" name="Am. J. Pathol.">
        <title>Heterogeneity of ductular reactions in adult rat and human liver revealed by novel expression of deleted in malignant brain tumor 1.</title>
        <authorList>
            <person name="Bisgaard H.C."/>
            <person name="Holmskov U."/>
            <person name="Santoni-Rugiu E."/>
            <person name="Nagy P."/>
            <person name="Nielsen O."/>
            <person name="Ott P."/>
            <person name="Hage E."/>
            <person name="Dalhoff K."/>
            <person name="Rasmussen L.J."/>
            <person name="Tygstrup N."/>
        </authorList>
    </citation>
    <scope>NUCLEOTIDE SEQUENCE [MRNA] (ISOFORM 1)</scope>
    <scope>FUNCTION</scope>
    <scope>TISSUE SPECIFICITY</scope>
    <source>
        <strain>Wistar</strain>
        <tissue>Liver</tissue>
    </source>
</reference>
<reference key="2">
    <citation type="submission" date="2004-02" db="EMBL/GenBank/DDBJ databases">
        <title>Pancrin a novel member of the scavenger receptor cysteine rich superfamily in the rat exocrine pancreas.</title>
        <authorList>
            <person name="Schmidt K."/>
            <person name="Kleene R.B."/>
            <person name="Schrader M."/>
        </authorList>
    </citation>
    <scope>NUCLEOTIDE SEQUENCE [MRNA] (ISOFORM 2)</scope>
    <source>
        <strain>Wistar</strain>
        <tissue>Pancreas</tissue>
    </source>
</reference>
<reference key="3">
    <citation type="journal article" date="1995" name="J. Biol. Chem.">
        <title>Molecular cloning of Ebnerin, a von Ebner's gland protein associated with taste buds.</title>
        <authorList>
            <person name="Li X.-J."/>
            <person name="Snyder S.H."/>
        </authorList>
    </citation>
    <scope>NUCLEOTIDE SEQUENCE [MRNA] OF 98-1418 (ISOFORM 1)</scope>
    <scope>PROTEIN SEQUENCE OF 1058-1074</scope>
    <scope>FUNCTION IN LIVER REGENERATION</scope>
    <scope>FUNCTION IN REGULATION OF TASTE SENSATION</scope>
    <scope>SUBCELLULAR LOCATION</scope>
    <scope>TISSUE SPECIFICITY</scope>
    <source>
        <tissue>Tongue</tissue>
    </source>
</reference>
<reference key="4">
    <citation type="journal article" date="2000" name="J. Cell Biol.">
        <title>Induction of terminal differentiation in epithelial cells requires polymerization of hensin by galectin 3.</title>
        <authorList>
            <person name="Hikita C."/>
            <person name="Vijayakumar S."/>
            <person name="Takito J."/>
            <person name="Erdjument-Bromage H."/>
            <person name="Tempst P."/>
            <person name="Al-Awqati Q."/>
        </authorList>
    </citation>
    <scope>INTERACTION WITH LGALS3</scope>
    <scope>FUNCTION</scope>
</reference>
<organism>
    <name type="scientific">Rattus norvegicus</name>
    <name type="common">Rat</name>
    <dbReference type="NCBI Taxonomy" id="10116"/>
    <lineage>
        <taxon>Eukaryota</taxon>
        <taxon>Metazoa</taxon>
        <taxon>Chordata</taxon>
        <taxon>Craniata</taxon>
        <taxon>Vertebrata</taxon>
        <taxon>Euteleostomi</taxon>
        <taxon>Mammalia</taxon>
        <taxon>Eutheria</taxon>
        <taxon>Euarchontoglires</taxon>
        <taxon>Glires</taxon>
        <taxon>Rodentia</taxon>
        <taxon>Myomorpha</taxon>
        <taxon>Muroidea</taxon>
        <taxon>Muridae</taxon>
        <taxon>Murinae</taxon>
        <taxon>Rattus</taxon>
    </lineage>
</organism>
<sequence length="1418" mass="155720">MGISIVIFEICLLWGQILSTASQSRSSTPDWWNHGGTINDVIYDTQETPEVTTTQVPDSTSIGTDSGLAVRLVNGGDRCRGRVEILYQGSWGTMCDDGTDSGLAVRLVNGGDRCRGRVEILYQGSWGTMCDDSWDINDANVVCRQLGCGWALSAPGSAQFGQGLGPIVLDDVACRGHEAYLWSCSHRGWLSHNCGHQEDAGVICSDSQTSSPTPGWWNPGGTNNDVIYDTQETTETSQTSSPTPDWWNHGGTINDVIYDTQETTEGTDSGLAVRLVNGGDRCRGRVEILYQGSWGTVCDDSWDINDANVVCRQLGCGWALSAPGSAQFGQGSGSIVLDDVACRGHEAYLWSCSHRGWLSHNCGHQEDAGVICSYSQTSSPTPDSQTSSPTPGWWNPGGTNNDVSYGPEQTTDATDSGLAVRLVNGGDRCQGRVEILYQGSWGTVCDDSWDTKDANVVCRQLVCGWALSAPGSAHFGQGSGSIVLDDVACTGHEAYLWSCSHRGWLSHNCGHHEDAGVICSDAQTQSTTWPDMWPTTTPETTTDWWTTKYSSSVPTTQFPTIADWWTTPSPEYTCGGLLTLPYGQFSSPYYPGSYPNNARCLWKIFVSSMNRVTVVFTDVQLEGGCNYDYILVFDGPENNSSLIARVCDGFNGSFTSTQNFMSVVFITDGSVTRRGFQADYYSTPISTSTTSPTTFPIVTDWWTTPSPEYTCGGLLTLPYGQFSSPYYPGSYPNNARCLWKIFVPSMNRVTVVFTDVQLEGGCNYDYILGFDGPEYNSSLIARVCDGSNGSFTSTQNFMSVVFITDGSVTRRGFQADYYSTPIRTSTTPPTTFPIITGNDSSLVLRLVNGTNRCEGRVEILYRGSWVPCADDSWDINDANVVCRQLGCGSALSAPGNAWFGQGSGLIVLDDVSCSGYESHLWNCRHPGWLVHNCRHVEDAGVICSLPDPTPSPGPVWTSPPFVNYTCGGFLTGLSGQFSSPYYPGSYPNNARCLWNIEVPNNYRVTVVFRDVQLEGGCNYDYIEIFDGPHHSSPLIARVCDGAMGSFTSTSNFMSVRFTTDHSVTRRGFRADYYSDFDNNTTNLLCLSNHMRASVSRSYLQSMGYSSRDLVIPGWNVSYQCQPQITQREVIFTIPYTGCGTTKQADNETINYSNFLKAAVSNGIIKRRKDLHIHVSCKMLQNTWVNTMYITNNTVEIQEVQYGNFDVNISFYTSSSFLYPVTSSPYYVDLDQNLYLQAEVLHSDTSLALFVDTCVASPHPNDFSSLTYDLIRSGCIRDETYQSYSSPSPRITRFKFSSFHFLNRFPSVYLQCKLVVCRANDVSSRCYRGCVVRSKRDVGSYQEKVDVVLGPIQLQSPSKEKRSLDLAVADVEKPASSQEVYPTAAIFGGVFLALVVAVAAFTLGRKTRTARGQPPSTKM</sequence>
<comment type="function">
    <text evidence="1 8 9 10">May play roles in mucosal defense system, cellular immune defense and epithelial differentiation (By similarity). May play a role in liver regeneration. May be an important factor in fate decision and differentiation of transit-amplifying ductular (oval) cells within the hepatic lineage. May function as a binding protein in saliva for the regulation of taste sensation. May play a role as an opsonin receptor for SFTPD and SPAR in macrophages tissues throughout the body, including epithelial cells lining the gastrointestinal tract (By similarity). Required for terminal differentiation of columnar epithelial cells during early embryogenesis. Displays a broad calcium-dependent binding spectrum against both Gram-positive and Gram-negative bacteria, suggesting a role in defense against bacterial pathogens. Binds to a range of poly-sulfated and poly-phosphorylated ligands which may explain its broad bacterial-binding specificity. Inhibits cytoinvasion of S.enterica. Associates with the actin cytoskeleton and is involved in its remodeling during regulated exocytosis. Interacts with pancreatic zymogens in a pH-dependent manner and may act as a Golgi cargo receptor in the regulated secretory pathway of the pancreatic acinar cell (By similarity).</text>
</comment>
<comment type="subunit">
    <text evidence="1 8">Binds SFTPD and SPAR in a calcium-dependent manner (By similarity). Interacts with LGALS3.</text>
</comment>
<comment type="subcellular location">
    <subcellularLocation>
        <location evidence="10">Secreted</location>
    </subcellularLocation>
    <subcellularLocation>
        <location evidence="1">Cytoplasmic vesicle</location>
        <location evidence="1">Secretory vesicle membrane</location>
        <topology evidence="1">Single-pass membrane protein</topology>
        <orientation evidence="1">Lumenal side</orientation>
    </subcellularLocation>
    <text evidence="1">Localized to the lumenal aspect of crypt cells in the small intestine. In the colon, seen in the lumenal aspect of surface epithelial cells (By similarity). Formed in the ducts of von Ebner gland and released into the fluid bathing the taste buds contained in the taste papillae.</text>
</comment>
<comment type="alternative products">
    <event type="alternative splicing"/>
    <isoform>
        <id>Q8CIZ5-1</id>
        <name>1</name>
        <name>Dmbt1 4.7kb</name>
        <sequence type="displayed"/>
    </isoform>
    <isoform>
        <id>Q8CIZ5-4</id>
        <name>2</name>
        <sequence type="described" ref="VSP_016854 VSP_016855 VSP_016856 VSP_016857 VSP_016858"/>
    </isoform>
</comment>
<comment type="tissue specificity">
    <text evidence="9 10">Expressed in von Ebner glands (VEG) (at protein level), olfactory epithelium and the lateral nasal gland. Expressed in transit-amplifying ductular (oval) cells. Up-regulated at day 3 after hepatectomy. Expressed in newly formed bile ducts and in structures resembling intestinal epithelium.</text>
</comment>
<comment type="domain">
    <text evidence="1">The SRCR domains mediate binding to bacteria.</text>
</comment>
<comment type="PTM">
    <text evidence="1">Highly N- and O-glycosylated. The O-glycans are heavily sulfated (By similarity).</text>
</comment>
<comment type="similarity">
    <text evidence="12">Belongs to the DMBT1 family.</text>
</comment>
<comment type="sequence caution" evidence="12">
    <conflict type="erroneous initiation">
        <sequence resource="EMBL-CDS" id="AAC52248"/>
    </conflict>
</comment>
<gene>
    <name type="primary">Dmbt1</name>
</gene>